<feature type="initiator methionine" description="Removed" evidence="1">
    <location>
        <position position="1"/>
    </location>
</feature>
<feature type="chain" id="PRO_0000089134" description="Actin-like protein 6A">
    <location>
        <begin position="2"/>
        <end position="429"/>
    </location>
</feature>
<feature type="modified residue" description="N-acetylserine" evidence="1">
    <location>
        <position position="2"/>
    </location>
</feature>
<feature type="modified residue" description="Phosphoserine" evidence="1">
    <location>
        <position position="86"/>
    </location>
</feature>
<feature type="modified residue" description="Phosphoserine" evidence="1">
    <location>
        <position position="233"/>
    </location>
</feature>
<feature type="cross-link" description="Glycyl lysine isopeptide (Lys-Gly) (interchain with G-Cter in SUMO2)" evidence="1">
    <location>
        <position position="62"/>
    </location>
</feature>
<feature type="sequence conflict" description="In Ref. 2; BAC41116." evidence="6" ref="2">
    <original>P</original>
    <variation>H</variation>
    <location>
        <position position="38"/>
    </location>
</feature>
<feature type="sequence conflict" description="In Ref. 2; BAC41116." evidence="6" ref="2">
    <original>K</original>
    <variation>Q</variation>
    <location>
        <position position="153"/>
    </location>
</feature>
<feature type="sequence conflict" description="In Ref. 1; AAC94992." evidence="6" ref="1">
    <original>M</original>
    <variation>I</variation>
    <location>
        <position position="322"/>
    </location>
</feature>
<comment type="function">
    <text evidence="1 2 4 5">Involved in transcriptional activation and repression of select genes by chromatin remodeling (alteration of DNA-nucleosome topology). Component of SWI/SNF chromatin remodeling complexes that carry out key enzymatic activities, changing chromatin structure by altering DNA-histone contacts within a nucleosome in an ATP-dependent manner. Required for maximal ATPase activity of SMARCA4/BRG1/BAF190A and for association of the SMARCA4/BRG1/BAF190A containing remodeling complex BAF with chromatin/nuclear matrix. Belongs to the neural progenitors-specific chromatin remodeling complex (npBAF complex) and is required for the proliferation of neural progenitors. During neural development a switch from a stem/progenitor to a postmitotic chromatin remodeling mechanism occurs as neurons exit the cell cycle and become committed to their adult state. The transition from proliferating neural stem/progenitor cells to postmitotic neurons requires a switch in subunit composition of the npBAF and nBAF complexes. As neural progenitors exit mitosis and differentiate into neurons, npBAF complexes which contain ACTL6A/BAF53A and PHF10/BAF45A, are exchanged for homologous alternative ACTL6B/BAF53B and DPF1/BAF45B or DPF3/BAF45C subunits in neuron-specific complexes (nBAF). The npBAF complex is essential for the self-renewal/proliferative capacity of the multipotent neural stem cells. The nBAF complex along with CREST plays a role regulating the activity of genes essential for dendrite growth (PubMed:17640523). Component of the NuA4 histone acetyltransferase (HAT) complex which is involved in transcriptional activation of select genes principally by acetylation of nucleosomal histones H4 and H2A. This modification may both alter nucleosome - DNA interactions and promote interaction of the modified histones with other proteins which positively regulate transcription. This complex may be required for the activation of transcriptional programs associated with oncogene and proto-oncogene mediated growth induction, tumor suppressor mediated growth arrest and replicative senescence, apoptosis, and DNA repair. NuA4 may also play a direct role in DNA repair when recruited to sites of DNA damage. Putative core component of the chromatin remodeling INO80 complex which is involved in transcriptional regulation, DNA replication and probably DNA repair (By similarity).</text>
</comment>
<comment type="subunit">
    <text evidence="1 2 3 4 5">Component of numerous complexes with chromatin remodeling and histone acetyltransferase activity. Component of the NuA4 histone acetyltransferase complex which contains the catalytic subunit KAT5/TIP60 and the subunits EP400, TRRAP/PAF400, BRD8/SMAP, EPC1, DMAP1/DNMAP1, RUVBL1/TIP49, RUVBL2, ING3, actin, ACTL6A/BAF53A, MORF4L1/MRG15, MORF4L2/MRGX, MRGBP, YEATS4/GAS41, VPS72/YL1 and MEAF6. The NuA4 complex interacts with MYC and the adenovirus E1A protein. Component of a NuA4-related complex which contains EP400, TRRAP/PAF400, SRCAP, BRD8/SMAP, EPC1, DMAP1/DNMAP1, RUVBL1/TIP49, RUVBL2, actin, ACTL6A/BAF53A, VPS72 and YEATS4/GAS41. Component of the multiprotein chromatin-remodeling complexes SWI/SNF: SWI/SNF-A (BAF), SWI/SNF-B (PBAF) and related complexes. The canonical complex contains a catalytic subunit (either SMARCA4/BRG1/BAF190A or SMARCA2/BRM/BAF190B) and at least SMARCE1, ACTL6A/BAF53, SMARCC1/BAF155, SMARCC2/BAF170, and SMARCB1/SNF5/BAF47. Other subunits specific to each of the complexes may also be present permitting several possible combinations developmentally and tissue specific. Component of the BAF complex, which includes at least actin (ACTB), ARID1A/BAF250A, ARID1B/BAF250B, SMARCA2/BRM, SMARCA4/BRG1/BAF190A, ACTL6A/BAF53, ACTL6B/BAF53B, SMARCE1/BAF57, SMARCC1/BAF155, SMARCC2/BAF170, SMARCB1/SNF5/INI1, and one or more SMARCD1/BAF60A, SMARCD2/BAF60B, or SMARCD3/BAF60C. In muscle cells, the BAF complex also contains DPF3 (Probable). Component of the BAF53 complex, at least composed of ACTL6A/BAF53A, RUVBL1/TIP49, SMARCA2/BRM/BAF190B and TRRAP/PAF400, and which may also include a HAT activity related to, but distinct from, that of KAT5. Component of neural progenitors-specific chromatin remodeling complex (npBAF complex) composed of at least, ARID1A/BAF250A or ARID1B/BAF250B, SMARCD1/BAF60A, SMARCD3/BAF60C, SMARCA2/BRM/BAF190B, SMARCA4/BRG1/BAF190A, SMARCB1/BAF47, SMARCC1/BAF155, SMARCE1/BAF57, SMARCC2/BAF170, PHF10/BAF45A, ACTL6A/BAF53A and actin. Component of SWI/SNF (GBAF) subcomplex, which includes at least BICRA or BICRAL (mutually exclusive), BRD9, SS18, SMARCA2/BRM, SMARCA4/BRG1/BAF190A, ACTL6A/BAF53, SMARCC1/BAF155, and SMARCD1/BAF60A (PubMed:29374058). May be a component of the SWI/SNF-B (PBAF) chromatin remodeling complex, at least composed of SMARCA4/BRG1, SMARCB1/BAF47/SNF5, ACTL6A/BAF53A or ACTL6B/BAF53B, SMARCE1/BAF57, SMARCD1/BAF60A, SMARCD2/BAF60B, perhaps SMARCD3/BAF60C, SMARCC1/BAF155, SMARCC2/BAF170, PBRM1/BAF180, ARID2/BAF200 and actin (By similarity). Interacts with SMARCA4/BRG1/BAF190A (By similarity). Interacts with PHF10/BAF45A (PubMed:17640523). Component of the chromatin remodeling INO80 complex; specifically part of a complex module associated with the DBINO domain of INO80 (By similarity). Interacts with DPF2 (By similarity).</text>
</comment>
<comment type="subcellular location">
    <subcellularLocation>
        <location evidence="1">Nucleus</location>
    </subcellularLocation>
</comment>
<comment type="tissue specificity">
    <text evidence="2">Widely expressed. Expressed selectively in neural stem and progenitor cells (at protein level).</text>
</comment>
<comment type="developmental stage">
    <text evidence="2">Expressed predominantly in 10.5 dpc-11.5 dpc neural cells. In the developing spinal cord (10.5 dpc-16.5 dpc), is specifically expressed in proliferating neural progenitors of the ventricular zone. In the developing forebrain and cerebellar primordium, expression is restricted to proliferating neuroepithelial progenitors and cerebellar granule precursors.</text>
</comment>
<comment type="similarity">
    <text evidence="6">Belongs to the actin family.</text>
</comment>
<reference key="1">
    <citation type="journal article" date="1998" name="Cell">
        <title>Rapid and phosphoinositol-dependent binding of the SWI/SNF-like BAF complex to chromatin after T lymphocyte receptor signaling.</title>
        <authorList>
            <person name="Zhao K."/>
            <person name="Wang W."/>
            <person name="Rando O.J."/>
            <person name="Xue Y."/>
            <person name="Swiderek K."/>
            <person name="Kuo A."/>
            <person name="Crabtree G.R."/>
        </authorList>
    </citation>
    <scope>NUCLEOTIDE SEQUENCE [MRNA]</scope>
</reference>
<reference key="2">
    <citation type="journal article" date="2005" name="Science">
        <title>The transcriptional landscape of the mammalian genome.</title>
        <authorList>
            <person name="Carninci P."/>
            <person name="Kasukawa T."/>
            <person name="Katayama S."/>
            <person name="Gough J."/>
            <person name="Frith M.C."/>
            <person name="Maeda N."/>
            <person name="Oyama R."/>
            <person name="Ravasi T."/>
            <person name="Lenhard B."/>
            <person name="Wells C."/>
            <person name="Kodzius R."/>
            <person name="Shimokawa K."/>
            <person name="Bajic V.B."/>
            <person name="Brenner S.E."/>
            <person name="Batalov S."/>
            <person name="Forrest A.R."/>
            <person name="Zavolan M."/>
            <person name="Davis M.J."/>
            <person name="Wilming L.G."/>
            <person name="Aidinis V."/>
            <person name="Allen J.E."/>
            <person name="Ambesi-Impiombato A."/>
            <person name="Apweiler R."/>
            <person name="Aturaliya R.N."/>
            <person name="Bailey T.L."/>
            <person name="Bansal M."/>
            <person name="Baxter L."/>
            <person name="Beisel K.W."/>
            <person name="Bersano T."/>
            <person name="Bono H."/>
            <person name="Chalk A.M."/>
            <person name="Chiu K.P."/>
            <person name="Choudhary V."/>
            <person name="Christoffels A."/>
            <person name="Clutterbuck D.R."/>
            <person name="Crowe M.L."/>
            <person name="Dalla E."/>
            <person name="Dalrymple B.P."/>
            <person name="de Bono B."/>
            <person name="Della Gatta G."/>
            <person name="di Bernardo D."/>
            <person name="Down T."/>
            <person name="Engstrom P."/>
            <person name="Fagiolini M."/>
            <person name="Faulkner G."/>
            <person name="Fletcher C.F."/>
            <person name="Fukushima T."/>
            <person name="Furuno M."/>
            <person name="Futaki S."/>
            <person name="Gariboldi M."/>
            <person name="Georgii-Hemming P."/>
            <person name="Gingeras T.R."/>
            <person name="Gojobori T."/>
            <person name="Green R.E."/>
            <person name="Gustincich S."/>
            <person name="Harbers M."/>
            <person name="Hayashi Y."/>
            <person name="Hensch T.K."/>
            <person name="Hirokawa N."/>
            <person name="Hill D."/>
            <person name="Huminiecki L."/>
            <person name="Iacono M."/>
            <person name="Ikeo K."/>
            <person name="Iwama A."/>
            <person name="Ishikawa T."/>
            <person name="Jakt M."/>
            <person name="Kanapin A."/>
            <person name="Katoh M."/>
            <person name="Kawasawa Y."/>
            <person name="Kelso J."/>
            <person name="Kitamura H."/>
            <person name="Kitano H."/>
            <person name="Kollias G."/>
            <person name="Krishnan S.P."/>
            <person name="Kruger A."/>
            <person name="Kummerfeld S.K."/>
            <person name="Kurochkin I.V."/>
            <person name="Lareau L.F."/>
            <person name="Lazarevic D."/>
            <person name="Lipovich L."/>
            <person name="Liu J."/>
            <person name="Liuni S."/>
            <person name="McWilliam S."/>
            <person name="Madan Babu M."/>
            <person name="Madera M."/>
            <person name="Marchionni L."/>
            <person name="Matsuda H."/>
            <person name="Matsuzawa S."/>
            <person name="Miki H."/>
            <person name="Mignone F."/>
            <person name="Miyake S."/>
            <person name="Morris K."/>
            <person name="Mottagui-Tabar S."/>
            <person name="Mulder N."/>
            <person name="Nakano N."/>
            <person name="Nakauchi H."/>
            <person name="Ng P."/>
            <person name="Nilsson R."/>
            <person name="Nishiguchi S."/>
            <person name="Nishikawa S."/>
            <person name="Nori F."/>
            <person name="Ohara O."/>
            <person name="Okazaki Y."/>
            <person name="Orlando V."/>
            <person name="Pang K.C."/>
            <person name="Pavan W.J."/>
            <person name="Pavesi G."/>
            <person name="Pesole G."/>
            <person name="Petrovsky N."/>
            <person name="Piazza S."/>
            <person name="Reed J."/>
            <person name="Reid J.F."/>
            <person name="Ring B.Z."/>
            <person name="Ringwald M."/>
            <person name="Rost B."/>
            <person name="Ruan Y."/>
            <person name="Salzberg S.L."/>
            <person name="Sandelin A."/>
            <person name="Schneider C."/>
            <person name="Schoenbach C."/>
            <person name="Sekiguchi K."/>
            <person name="Semple C.A."/>
            <person name="Seno S."/>
            <person name="Sessa L."/>
            <person name="Sheng Y."/>
            <person name="Shibata Y."/>
            <person name="Shimada H."/>
            <person name="Shimada K."/>
            <person name="Silva D."/>
            <person name="Sinclair B."/>
            <person name="Sperling S."/>
            <person name="Stupka E."/>
            <person name="Sugiura K."/>
            <person name="Sultana R."/>
            <person name="Takenaka Y."/>
            <person name="Taki K."/>
            <person name="Tammoja K."/>
            <person name="Tan S.L."/>
            <person name="Tang S."/>
            <person name="Taylor M.S."/>
            <person name="Tegner J."/>
            <person name="Teichmann S.A."/>
            <person name="Ueda H.R."/>
            <person name="van Nimwegen E."/>
            <person name="Verardo R."/>
            <person name="Wei C.L."/>
            <person name="Yagi K."/>
            <person name="Yamanishi H."/>
            <person name="Zabarovsky E."/>
            <person name="Zhu S."/>
            <person name="Zimmer A."/>
            <person name="Hide W."/>
            <person name="Bult C."/>
            <person name="Grimmond S.M."/>
            <person name="Teasdale R.D."/>
            <person name="Liu E.T."/>
            <person name="Brusic V."/>
            <person name="Quackenbush J."/>
            <person name="Wahlestedt C."/>
            <person name="Mattick J.S."/>
            <person name="Hume D.A."/>
            <person name="Kai C."/>
            <person name="Sasaki D."/>
            <person name="Tomaru Y."/>
            <person name="Fukuda S."/>
            <person name="Kanamori-Katayama M."/>
            <person name="Suzuki M."/>
            <person name="Aoki J."/>
            <person name="Arakawa T."/>
            <person name="Iida J."/>
            <person name="Imamura K."/>
            <person name="Itoh M."/>
            <person name="Kato T."/>
            <person name="Kawaji H."/>
            <person name="Kawagashira N."/>
            <person name="Kawashima T."/>
            <person name="Kojima M."/>
            <person name="Kondo S."/>
            <person name="Konno H."/>
            <person name="Nakano K."/>
            <person name="Ninomiya N."/>
            <person name="Nishio T."/>
            <person name="Okada M."/>
            <person name="Plessy C."/>
            <person name="Shibata K."/>
            <person name="Shiraki T."/>
            <person name="Suzuki S."/>
            <person name="Tagami M."/>
            <person name="Waki K."/>
            <person name="Watahiki A."/>
            <person name="Okamura-Oho Y."/>
            <person name="Suzuki H."/>
            <person name="Kawai J."/>
            <person name="Hayashizaki Y."/>
        </authorList>
    </citation>
    <scope>NUCLEOTIDE SEQUENCE [LARGE SCALE MRNA]</scope>
    <source>
        <strain>C57BL/6J</strain>
        <tissue>Embryonic brain</tissue>
    </source>
</reference>
<reference key="3">
    <citation type="journal article" date="2004" name="Genome Res.">
        <title>The status, quality, and expansion of the NIH full-length cDNA project: the Mammalian Gene Collection (MGC).</title>
        <authorList>
            <consortium name="The MGC Project Team"/>
        </authorList>
    </citation>
    <scope>NUCLEOTIDE SEQUENCE [LARGE SCALE MRNA]</scope>
    <source>
        <tissue>Mammary gland</tissue>
    </source>
</reference>
<reference key="4">
    <citation type="journal article" date="2007" name="Neuron">
        <title>An essential switch in subunit composition of a chromatin remodeling complex during neural development.</title>
        <authorList>
            <person name="Lessard J."/>
            <person name="Wu J.I."/>
            <person name="Ranish J.A."/>
            <person name="Wan M."/>
            <person name="Winslow M.M."/>
            <person name="Staahl B.T."/>
            <person name="Wu H."/>
            <person name="Aebersold R."/>
            <person name="Graef I.A."/>
            <person name="Crabtree G.R."/>
        </authorList>
    </citation>
    <scope>FUNCTION</scope>
    <scope>FUNCTION OF THE NBAF AND NPBAF COMPLEXES</scope>
    <scope>IDENTIFICATION BY MASS SPECTROMETRY</scope>
    <scope>IDENTIFICATION IN THE NPBAF COMPLEX</scope>
    <scope>INTERACTION WITH PHF10</scope>
    <scope>TISSUE SPECIFICITY</scope>
    <scope>DEVELOPMENTAL STAGE</scope>
</reference>
<reference key="5">
    <citation type="journal article" date="2010" name="Cell">
        <title>A tissue-specific atlas of mouse protein phosphorylation and expression.</title>
        <authorList>
            <person name="Huttlin E.L."/>
            <person name="Jedrychowski M.P."/>
            <person name="Elias J.E."/>
            <person name="Goswami T."/>
            <person name="Rad R."/>
            <person name="Beausoleil S.A."/>
            <person name="Villen J."/>
            <person name="Haas W."/>
            <person name="Sowa M.E."/>
            <person name="Gygi S.P."/>
        </authorList>
    </citation>
    <scope>IDENTIFICATION BY MASS SPECTROMETRY [LARGE SCALE ANALYSIS]</scope>
    <source>
        <tissue>Brown adipose tissue</tissue>
        <tissue>Heart</tissue>
        <tissue>Kidney</tissue>
        <tissue>Lung</tissue>
        <tissue>Spleen</tissue>
        <tissue>Testis</tissue>
    </source>
</reference>
<reference key="6">
    <citation type="journal article" date="2012" name="J. Biol. Chem.">
        <title>SWI/SNF chromatin-remodeling factors: multiscale analyses and diverse functions.</title>
        <authorList>
            <person name="Euskirchen G."/>
            <person name="Auerbach R.K."/>
            <person name="Snyder M."/>
        </authorList>
    </citation>
    <scope>REVIEW ON SWI/SNF CHROMATIN REMODELING COMPLEXES</scope>
</reference>
<reference key="7">
    <citation type="journal article" date="2015" name="Sci. Adv.">
        <title>Mammalian SWI/SNF chromatin remodeling complexes and cancer: Mechanistic insights gained from human genomics.</title>
        <authorList>
            <person name="Kadoch C."/>
            <person name="Crabtree G.R."/>
        </authorList>
    </citation>
    <scope>REVIEW ON SWI/SNF CHROMATIN REMODELING COMPLEXES</scope>
</reference>
<reference key="8">
    <citation type="journal article" date="2018" name="J. Biol. Chem.">
        <title>Glioma tumor suppressor candidate region gene 1 (GLTSCR1) and its paralog GLTSCR1-like form SWI/SNF chromatin remodeling subcomplexes.</title>
        <authorList>
            <person name="Alpsoy A."/>
            <person name="Dykhuizen E.C."/>
        </authorList>
    </citation>
    <scope>IDENTIFICATION IN THE GBAF COMPLEX</scope>
</reference>
<gene>
    <name type="primary">Actl6a</name>
    <name type="synonym">Actl6</name>
    <name type="synonym">Baf53a</name>
</gene>
<protein>
    <recommendedName>
        <fullName>Actin-like protein 6A</fullName>
    </recommendedName>
    <alternativeName>
        <fullName>53 kDa BRG1-associated factor A</fullName>
    </alternativeName>
    <alternativeName>
        <fullName>Actin-related protein Baf53a</fullName>
    </alternativeName>
    <alternativeName>
        <fullName>BRG1-associated factor 53A</fullName>
        <shortName>BAF53A</shortName>
    </alternativeName>
</protein>
<proteinExistence type="evidence at protein level"/>
<dbReference type="EMBL" id="AF041476">
    <property type="protein sequence ID" value="AAC94992.1"/>
    <property type="molecule type" value="mRNA"/>
</dbReference>
<dbReference type="EMBL" id="AK090154">
    <property type="protein sequence ID" value="BAC41116.1"/>
    <property type="molecule type" value="mRNA"/>
</dbReference>
<dbReference type="EMBL" id="BC001994">
    <property type="protein sequence ID" value="AAH01994.1"/>
    <property type="molecule type" value="mRNA"/>
</dbReference>
<dbReference type="CCDS" id="CCDS17298.1"/>
<dbReference type="RefSeq" id="NP_062647.2">
    <property type="nucleotide sequence ID" value="NM_019673.3"/>
</dbReference>
<dbReference type="SMR" id="Q9Z2N8"/>
<dbReference type="BioGRID" id="207995">
    <property type="interactions" value="27"/>
</dbReference>
<dbReference type="ComplexPortal" id="CPX-1232">
    <property type="entry name" value="SWI/SNF ATP-dependent chromatin remodeling complex, ACTL6A-ARID1A-SMARCA2 variant"/>
</dbReference>
<dbReference type="ComplexPortal" id="CPX-1233">
    <property type="entry name" value="SWI/SNF ATP-dependent chromatin remodeling complex, ACTL6A-ARID1A-SMARCA4 variant"/>
</dbReference>
<dbReference type="ComplexPortal" id="CPX-1234">
    <property type="entry name" value="SWI/SNF ATP-dependent chromatin remodeling complex, ACTL6A-ARID1B-SMARCA2 variant"/>
</dbReference>
<dbReference type="ComplexPortal" id="CPX-1235">
    <property type="entry name" value="SWI/SNF ATP-dependent chromatin remodeling complex, ACTL6A-ARID1B-SMARCA4 variant"/>
</dbReference>
<dbReference type="ComplexPortal" id="CPX-1240">
    <property type="entry name" value="Muscle cell-specific SWI/SNF ATP-dependent chromatin remodeling complex, ACTL6A-ARID1A-SMARCA2 variant"/>
</dbReference>
<dbReference type="ComplexPortal" id="CPX-1241">
    <property type="entry name" value="Muscle cell-specific SWI/SNF ATP-dependent chromatin remodeling complex, ACTL6A-ARID1A-SMARCA4 variant"/>
</dbReference>
<dbReference type="ComplexPortal" id="CPX-1242">
    <property type="entry name" value="Muscle cell-specific SWI/SNF ATP-dependent chromatin remodeling complex, ACTL6A-ARID1B-SMARCA2 variant"/>
</dbReference>
<dbReference type="ComplexPortal" id="CPX-1243">
    <property type="entry name" value="Muscle cell-specific SWI/SNF ATP-dependent chromatin remodeling complex, ACTL6A-ARID1B-SMARCA4 variant"/>
</dbReference>
<dbReference type="ComplexPortal" id="CPX-1248">
    <property type="entry name" value="Polybromo-associated SWI/SNF ATP-dependent chromatin remodeling complex, ACTL6A variant"/>
</dbReference>
<dbReference type="ComplexPortal" id="CPX-1251">
    <property type="entry name" value="Embryonic stem cell-specific SWI/SNF ATP-dependent chromatin remodeling complex"/>
</dbReference>
<dbReference type="ComplexPortal" id="CPX-1252">
    <property type="entry name" value="Neural progenitor-specific SWI/SNF ATP-dependent chromatin remodeling complex, ARID1A-SMARCA2 variant"/>
</dbReference>
<dbReference type="ComplexPortal" id="CPX-1253">
    <property type="entry name" value="Neural progenitor-specific SWI/SNF ATP-dependent chromatin remodeling complex, ARID1A-SMARCA4 variant"/>
</dbReference>
<dbReference type="ComplexPortal" id="CPX-1254">
    <property type="entry name" value="Neural progenitor-specific SWI/SNF ATP-dependent chromatin remodeling complex, ARID1B-SMARCA2 variant"/>
</dbReference>
<dbReference type="ComplexPortal" id="CPX-1255">
    <property type="entry name" value="Neural progenitor-specific SWI/SNF ATP-dependent chromatin remodeling complex, ARID1B-SMARCA4 variant"/>
</dbReference>
<dbReference type="ComplexPortal" id="CPX-4202">
    <property type="entry name" value="GBAF (SWI/SNF) ATP-dependent chromatin remodeling complex, ACTL6A-BICRA-SMARCA2 variant"/>
</dbReference>
<dbReference type="ComplexPortal" id="CPX-4204">
    <property type="entry name" value="GBAF (SWI/SNF) ATP-dependent chromatin remodeling complex, ACTL6A-BICRAL-SMARCA2 variant"/>
</dbReference>
<dbReference type="ComplexPortal" id="CPX-4221">
    <property type="entry name" value="GBAF (SWI/SNF) ATP-dependent chromatin remodeling complex, ACTL6A-BICRA-SMARCA4 variant"/>
</dbReference>
<dbReference type="ComplexPortal" id="CPX-4222">
    <property type="entry name" value="GBAF (SWI/SNF) ATP-dependent chromatin remodeling complex, ACTL6A-BICRAL-SMARCA4 variant"/>
</dbReference>
<dbReference type="ComplexPortal" id="CPX-878">
    <property type="entry name" value="INO80 chromatin remodeling complex"/>
</dbReference>
<dbReference type="ComplexPortal" id="CPX-976">
    <property type="entry name" value="SRCAP chromatin remodeling complex"/>
</dbReference>
<dbReference type="ComplexPortal" id="CPX-990">
    <property type="entry name" value="NuA4 histone acetyltransferase complex"/>
</dbReference>
<dbReference type="CORUM" id="Q9Z2N8"/>
<dbReference type="FunCoup" id="Q9Z2N8">
    <property type="interactions" value="4382"/>
</dbReference>
<dbReference type="IntAct" id="Q9Z2N8">
    <property type="interactions" value="12"/>
</dbReference>
<dbReference type="MINT" id="Q9Z2N8"/>
<dbReference type="STRING" id="10090.ENSMUSP00000029214"/>
<dbReference type="iPTMnet" id="Q9Z2N8"/>
<dbReference type="PhosphoSitePlus" id="Q9Z2N8"/>
<dbReference type="SwissPalm" id="Q9Z2N8"/>
<dbReference type="REPRODUCTION-2DPAGE" id="Q9Z2N8"/>
<dbReference type="jPOST" id="Q9Z2N8"/>
<dbReference type="PaxDb" id="10090-ENSMUSP00000029214"/>
<dbReference type="ProteomicsDB" id="285978"/>
<dbReference type="Pumba" id="Q9Z2N8"/>
<dbReference type="Antibodypedia" id="33747">
    <property type="antibodies" value="376 antibodies from 38 providers"/>
</dbReference>
<dbReference type="DNASU" id="56456"/>
<dbReference type="Ensembl" id="ENSMUST00000029214.14">
    <property type="protein sequence ID" value="ENSMUSP00000029214.8"/>
    <property type="gene ID" value="ENSMUSG00000027671.15"/>
</dbReference>
<dbReference type="GeneID" id="56456"/>
<dbReference type="KEGG" id="mmu:56456"/>
<dbReference type="UCSC" id="uc012coo.1">
    <property type="organism name" value="mouse"/>
</dbReference>
<dbReference type="AGR" id="MGI:1861453"/>
<dbReference type="CTD" id="86"/>
<dbReference type="MGI" id="MGI:1861453">
    <property type="gene designation" value="Actl6a"/>
</dbReference>
<dbReference type="VEuPathDB" id="HostDB:ENSMUSG00000027671"/>
<dbReference type="eggNOG" id="KOG0679">
    <property type="taxonomic scope" value="Eukaryota"/>
</dbReference>
<dbReference type="GeneTree" id="ENSGT00940000156305"/>
<dbReference type="HOGENOM" id="CLU_027965_6_0_1"/>
<dbReference type="InParanoid" id="Q9Z2N8"/>
<dbReference type="OMA" id="MTEAPWN"/>
<dbReference type="OrthoDB" id="5132116at2759"/>
<dbReference type="PhylomeDB" id="Q9Z2N8"/>
<dbReference type="TreeFam" id="TF312863"/>
<dbReference type="Reactome" id="R-MMU-3214858">
    <property type="pathway name" value="RMTs methylate histone arginines"/>
</dbReference>
<dbReference type="Reactome" id="R-MMU-5689603">
    <property type="pathway name" value="UCH proteinases"/>
</dbReference>
<dbReference type="Reactome" id="R-MMU-5696394">
    <property type="pathway name" value="DNA Damage Recognition in GG-NER"/>
</dbReference>
<dbReference type="Reactome" id="R-MMU-8939243">
    <property type="pathway name" value="RUNX1 interacts with co-factors whose precise effect on RUNX1 targets is not known"/>
</dbReference>
<dbReference type="BioGRID-ORCS" id="56456">
    <property type="hits" value="36 hits in 117 CRISPR screens"/>
</dbReference>
<dbReference type="ChiTaRS" id="Actl6a">
    <property type="organism name" value="mouse"/>
</dbReference>
<dbReference type="PRO" id="PR:Q9Z2N8"/>
<dbReference type="Proteomes" id="UP000000589">
    <property type="component" value="Chromosome 3"/>
</dbReference>
<dbReference type="RNAct" id="Q9Z2N8">
    <property type="molecule type" value="protein"/>
</dbReference>
<dbReference type="Bgee" id="ENSMUSG00000027671">
    <property type="expression patterns" value="Expressed in urogenital fold and 289 other cell types or tissues"/>
</dbReference>
<dbReference type="ExpressionAtlas" id="Q9Z2N8">
    <property type="expression patterns" value="baseline and differential"/>
</dbReference>
<dbReference type="GO" id="GO:0035060">
    <property type="term" value="C:brahma complex"/>
    <property type="evidence" value="ECO:0000303"/>
    <property type="project" value="ComplexPortal"/>
</dbReference>
<dbReference type="GO" id="GO:0000785">
    <property type="term" value="C:chromatin"/>
    <property type="evidence" value="ECO:0000303"/>
    <property type="project" value="ComplexPortal"/>
</dbReference>
<dbReference type="GO" id="GO:0140288">
    <property type="term" value="C:GBAF complex"/>
    <property type="evidence" value="ECO:0000303"/>
    <property type="project" value="ComplexPortal"/>
</dbReference>
<dbReference type="GO" id="GO:0031011">
    <property type="term" value="C:Ino80 complex"/>
    <property type="evidence" value="ECO:0000266"/>
    <property type="project" value="ComplexPortal"/>
</dbReference>
<dbReference type="GO" id="GO:0000776">
    <property type="term" value="C:kinetochore"/>
    <property type="evidence" value="ECO:0000303"/>
    <property type="project" value="ComplexPortal"/>
</dbReference>
<dbReference type="GO" id="GO:0071564">
    <property type="term" value="C:npBAF complex"/>
    <property type="evidence" value="ECO:0000314"/>
    <property type="project" value="UniProtKB"/>
</dbReference>
<dbReference type="GO" id="GO:0035267">
    <property type="term" value="C:NuA4 histone acetyltransferase complex"/>
    <property type="evidence" value="ECO:0000250"/>
    <property type="project" value="UniProtKB"/>
</dbReference>
<dbReference type="GO" id="GO:0016363">
    <property type="term" value="C:nuclear matrix"/>
    <property type="evidence" value="ECO:0000303"/>
    <property type="project" value="ComplexPortal"/>
</dbReference>
<dbReference type="GO" id="GO:0005654">
    <property type="term" value="C:nucleoplasm"/>
    <property type="evidence" value="ECO:0000304"/>
    <property type="project" value="Reactome"/>
</dbReference>
<dbReference type="GO" id="GO:0000786">
    <property type="term" value="C:nucleosome"/>
    <property type="evidence" value="ECO:0000266"/>
    <property type="project" value="ComplexPortal"/>
</dbReference>
<dbReference type="GO" id="GO:0005634">
    <property type="term" value="C:nucleus"/>
    <property type="evidence" value="ECO:0000314"/>
    <property type="project" value="MGI"/>
</dbReference>
<dbReference type="GO" id="GO:0005886">
    <property type="term" value="C:plasma membrane"/>
    <property type="evidence" value="ECO:0007669"/>
    <property type="project" value="Ensembl"/>
</dbReference>
<dbReference type="GO" id="GO:0016586">
    <property type="term" value="C:RSC-type complex"/>
    <property type="evidence" value="ECO:0000303"/>
    <property type="project" value="ComplexPortal"/>
</dbReference>
<dbReference type="GO" id="GO:0016514">
    <property type="term" value="C:SWI/SNF complex"/>
    <property type="evidence" value="ECO:0000314"/>
    <property type="project" value="UniProtKB"/>
</dbReference>
<dbReference type="GO" id="GO:0003682">
    <property type="term" value="F:chromatin binding"/>
    <property type="evidence" value="ECO:0000314"/>
    <property type="project" value="MGI"/>
</dbReference>
<dbReference type="GO" id="GO:0001825">
    <property type="term" value="P:blastocyst formation"/>
    <property type="evidence" value="ECO:0000315"/>
    <property type="project" value="MGI"/>
</dbReference>
<dbReference type="GO" id="GO:0006338">
    <property type="term" value="P:chromatin remodeling"/>
    <property type="evidence" value="ECO:0000314"/>
    <property type="project" value="MGI"/>
</dbReference>
<dbReference type="GO" id="GO:0006310">
    <property type="term" value="P:DNA recombination"/>
    <property type="evidence" value="ECO:0007669"/>
    <property type="project" value="UniProtKB-KW"/>
</dbReference>
<dbReference type="GO" id="GO:0006281">
    <property type="term" value="P:DNA repair"/>
    <property type="evidence" value="ECO:0007669"/>
    <property type="project" value="UniProtKB-KW"/>
</dbReference>
<dbReference type="GO" id="GO:0045596">
    <property type="term" value="P:negative regulation of cell differentiation"/>
    <property type="evidence" value="ECO:0000303"/>
    <property type="project" value="ComplexPortal"/>
</dbReference>
<dbReference type="GO" id="GO:0007399">
    <property type="term" value="P:nervous system development"/>
    <property type="evidence" value="ECO:0000315"/>
    <property type="project" value="UniProtKB"/>
</dbReference>
<dbReference type="GO" id="GO:0003407">
    <property type="term" value="P:neural retina development"/>
    <property type="evidence" value="ECO:0007669"/>
    <property type="project" value="Ensembl"/>
</dbReference>
<dbReference type="GO" id="GO:0045597">
    <property type="term" value="P:positive regulation of cell differentiation"/>
    <property type="evidence" value="ECO:0000303"/>
    <property type="project" value="ComplexPortal"/>
</dbReference>
<dbReference type="GO" id="GO:0008284">
    <property type="term" value="P:positive regulation of cell population proliferation"/>
    <property type="evidence" value="ECO:0000303"/>
    <property type="project" value="ComplexPortal"/>
</dbReference>
<dbReference type="GO" id="GO:0045739">
    <property type="term" value="P:positive regulation of DNA repair"/>
    <property type="evidence" value="ECO:0000314"/>
    <property type="project" value="ComplexPortal"/>
</dbReference>
<dbReference type="GO" id="GO:0045893">
    <property type="term" value="P:positive regulation of DNA-templated transcription"/>
    <property type="evidence" value="ECO:0000266"/>
    <property type="project" value="ComplexPortal"/>
</dbReference>
<dbReference type="GO" id="GO:2000781">
    <property type="term" value="P:positive regulation of double-strand break repair"/>
    <property type="evidence" value="ECO:0000303"/>
    <property type="project" value="ComplexPortal"/>
</dbReference>
<dbReference type="GO" id="GO:1905168">
    <property type="term" value="P:positive regulation of double-strand break repair via homologous recombination"/>
    <property type="evidence" value="ECO:0000266"/>
    <property type="project" value="ComplexPortal"/>
</dbReference>
<dbReference type="GO" id="GO:0045663">
    <property type="term" value="P:positive regulation of myoblast differentiation"/>
    <property type="evidence" value="ECO:0000303"/>
    <property type="project" value="ComplexPortal"/>
</dbReference>
<dbReference type="GO" id="GO:1902459">
    <property type="term" value="P:positive regulation of stem cell population maintenance"/>
    <property type="evidence" value="ECO:0000303"/>
    <property type="project" value="ComplexPortal"/>
</dbReference>
<dbReference type="GO" id="GO:0045582">
    <property type="term" value="P:positive regulation of T cell differentiation"/>
    <property type="evidence" value="ECO:0000303"/>
    <property type="project" value="ComplexPortal"/>
</dbReference>
<dbReference type="GO" id="GO:1904507">
    <property type="term" value="P:positive regulation of telomere maintenance in response to DNA damage"/>
    <property type="evidence" value="ECO:0000315"/>
    <property type="project" value="ComplexPortal"/>
</dbReference>
<dbReference type="GO" id="GO:0042981">
    <property type="term" value="P:regulation of apoptotic process"/>
    <property type="evidence" value="ECO:0000303"/>
    <property type="project" value="ComplexPortal"/>
</dbReference>
<dbReference type="GO" id="GO:0051726">
    <property type="term" value="P:regulation of cell cycle"/>
    <property type="evidence" value="ECO:0000266"/>
    <property type="project" value="ComplexPortal"/>
</dbReference>
<dbReference type="GO" id="GO:0033044">
    <property type="term" value="P:regulation of chromosome organization"/>
    <property type="evidence" value="ECO:0000266"/>
    <property type="project" value="ComplexPortal"/>
</dbReference>
<dbReference type="GO" id="GO:0006282">
    <property type="term" value="P:regulation of DNA repair"/>
    <property type="evidence" value="ECO:0000314"/>
    <property type="project" value="ComplexPortal"/>
</dbReference>
<dbReference type="GO" id="GO:0006275">
    <property type="term" value="P:regulation of DNA replication"/>
    <property type="evidence" value="ECO:0000266"/>
    <property type="project" value="ComplexPortal"/>
</dbReference>
<dbReference type="GO" id="GO:0060382">
    <property type="term" value="P:regulation of DNA strand elongation"/>
    <property type="evidence" value="ECO:0000266"/>
    <property type="project" value="ComplexPortal"/>
</dbReference>
<dbReference type="GO" id="GO:0006355">
    <property type="term" value="P:regulation of DNA-templated transcription"/>
    <property type="evidence" value="ECO:0000303"/>
    <property type="project" value="ComplexPortal"/>
</dbReference>
<dbReference type="GO" id="GO:2000779">
    <property type="term" value="P:regulation of double-strand break repair"/>
    <property type="evidence" value="ECO:0000303"/>
    <property type="project" value="ComplexPortal"/>
</dbReference>
<dbReference type="GO" id="GO:0045995">
    <property type="term" value="P:regulation of embryonic development"/>
    <property type="evidence" value="ECO:0000315"/>
    <property type="project" value="ComplexPortal"/>
</dbReference>
<dbReference type="GO" id="GO:0070316">
    <property type="term" value="P:regulation of G0 to G1 transition"/>
    <property type="evidence" value="ECO:0000303"/>
    <property type="project" value="ComplexPortal"/>
</dbReference>
<dbReference type="GO" id="GO:2000045">
    <property type="term" value="P:regulation of G1/S transition of mitotic cell cycle"/>
    <property type="evidence" value="ECO:0000303"/>
    <property type="project" value="ComplexPortal"/>
</dbReference>
<dbReference type="GO" id="GO:0030071">
    <property type="term" value="P:regulation of mitotic metaphase/anaphase transition"/>
    <property type="evidence" value="ECO:0000303"/>
    <property type="project" value="ComplexPortal"/>
</dbReference>
<dbReference type="GO" id="GO:2000819">
    <property type="term" value="P:regulation of nucleotide-excision repair"/>
    <property type="evidence" value="ECO:0000303"/>
    <property type="project" value="ComplexPortal"/>
</dbReference>
<dbReference type="GO" id="GO:0006357">
    <property type="term" value="P:regulation of transcription by RNA polymerase II"/>
    <property type="evidence" value="ECO:0000303"/>
    <property type="project" value="ComplexPortal"/>
</dbReference>
<dbReference type="GO" id="GO:0021510">
    <property type="term" value="P:spinal cord development"/>
    <property type="evidence" value="ECO:0007669"/>
    <property type="project" value="Ensembl"/>
</dbReference>
<dbReference type="GO" id="GO:0000723">
    <property type="term" value="P:telomere maintenance"/>
    <property type="evidence" value="ECO:0000315"/>
    <property type="project" value="ComplexPortal"/>
</dbReference>
<dbReference type="CDD" id="cd13395">
    <property type="entry name" value="ASKHA_NBD_Arp4_ACTL6-like"/>
    <property type="match status" value="1"/>
</dbReference>
<dbReference type="FunFam" id="3.30.420.40:FF:000050">
    <property type="entry name" value="Actin, alpha skeletal muscle"/>
    <property type="match status" value="1"/>
</dbReference>
<dbReference type="FunFam" id="2.30.36.70:FF:000004">
    <property type="entry name" value="Actin-like 6A, isoform CRA_a"/>
    <property type="match status" value="1"/>
</dbReference>
<dbReference type="FunFam" id="3.90.640.10:FF:000009">
    <property type="entry name" value="Actin-like 6A, isoform CRA_a"/>
    <property type="match status" value="1"/>
</dbReference>
<dbReference type="FunFam" id="3.30.420.40:FF:000375">
    <property type="entry name" value="Actin-related protein 8"/>
    <property type="match status" value="1"/>
</dbReference>
<dbReference type="FunFam" id="3.30.420.40:FF:000058">
    <property type="entry name" value="Putative actin-related protein 5"/>
    <property type="match status" value="1"/>
</dbReference>
<dbReference type="Gene3D" id="3.30.420.40">
    <property type="match status" value="2"/>
</dbReference>
<dbReference type="Gene3D" id="2.30.36.70">
    <property type="entry name" value="Actin, Chain A, domain 2"/>
    <property type="match status" value="1"/>
</dbReference>
<dbReference type="Gene3D" id="3.90.640.10">
    <property type="entry name" value="Actin, Chain A, domain 4"/>
    <property type="match status" value="1"/>
</dbReference>
<dbReference type="InterPro" id="IPR004000">
    <property type="entry name" value="Actin"/>
</dbReference>
<dbReference type="InterPro" id="IPR004001">
    <property type="entry name" value="Actin_CS"/>
</dbReference>
<dbReference type="InterPro" id="IPR043129">
    <property type="entry name" value="ATPase_NBD"/>
</dbReference>
<dbReference type="PANTHER" id="PTHR11937">
    <property type="entry name" value="ACTIN"/>
    <property type="match status" value="1"/>
</dbReference>
<dbReference type="Pfam" id="PF00022">
    <property type="entry name" value="Actin"/>
    <property type="match status" value="1"/>
</dbReference>
<dbReference type="PRINTS" id="PR00190">
    <property type="entry name" value="ACTIN"/>
</dbReference>
<dbReference type="SMART" id="SM00268">
    <property type="entry name" value="ACTIN"/>
    <property type="match status" value="1"/>
</dbReference>
<dbReference type="SUPFAM" id="SSF53067">
    <property type="entry name" value="Actin-like ATPase domain"/>
    <property type="match status" value="2"/>
</dbReference>
<dbReference type="PROSITE" id="PS00432">
    <property type="entry name" value="ACTINS_2"/>
    <property type="match status" value="1"/>
</dbReference>
<sequence>MSGGVYGGDEVGALVFDIGSYTVRAGYAGEDCPKVDFPTAIGVVLERDDGSTMMEIDGDKGKQGGPTYYIDTNALRVPRENMEAISPLKNGMVEDWDSFQAILDHTYKMHVKSEASLHPVLMSEAPWNTRAKREKLTELMFEHYSIPAFFLCKTAVLTAFANGRSTGLILDSGATHTTAIPVHDGYVLQQGIVKSPLAGDFITMQCRELFQEMNIELIPPYMIASKEAVREGSPANWKRKEKLPQVTRSWHNYMCNCVIQDFQASVLQVSDSTYDEQVAAQMPTVHYEFPNGYNCDFGAERLKIPEGLFDPSNVKGLSGNTMLGVSHVVTTSVGMCDIDIRPGLYGSVIVAGGNTLIQSFTDRLNRELSQKTPPSMRLKLIANNTTVERRFSSWIGGSILASLGTFQQMWISKQEYEEGGKQCVERKCP</sequence>
<accession>Q9Z2N8</accession>
<accession>Q8C1W3</accession>
<accession>Q99M56</accession>
<evidence type="ECO:0000250" key="1">
    <source>
        <dbReference type="UniProtKB" id="O96019"/>
    </source>
</evidence>
<evidence type="ECO:0000269" key="2">
    <source>
    </source>
</evidence>
<evidence type="ECO:0000269" key="3">
    <source>
    </source>
</evidence>
<evidence type="ECO:0000303" key="4">
    <source>
    </source>
</evidence>
<evidence type="ECO:0000303" key="5">
    <source>
    </source>
</evidence>
<evidence type="ECO:0000305" key="6"/>
<keyword id="KW-0007">Acetylation</keyword>
<keyword id="KW-0010">Activator</keyword>
<keyword id="KW-0156">Chromatin regulator</keyword>
<keyword id="KW-0227">DNA damage</keyword>
<keyword id="KW-0233">DNA recombination</keyword>
<keyword id="KW-0234">DNA repair</keyword>
<keyword id="KW-0341">Growth regulation</keyword>
<keyword id="KW-1017">Isopeptide bond</keyword>
<keyword id="KW-0524">Neurogenesis</keyword>
<keyword id="KW-0539">Nucleus</keyword>
<keyword id="KW-0597">Phosphoprotein</keyword>
<keyword id="KW-1185">Reference proteome</keyword>
<keyword id="KW-0804">Transcription</keyword>
<keyword id="KW-0805">Transcription regulation</keyword>
<keyword id="KW-0832">Ubl conjugation</keyword>
<name>ACL6A_MOUSE</name>
<organism>
    <name type="scientific">Mus musculus</name>
    <name type="common">Mouse</name>
    <dbReference type="NCBI Taxonomy" id="10090"/>
    <lineage>
        <taxon>Eukaryota</taxon>
        <taxon>Metazoa</taxon>
        <taxon>Chordata</taxon>
        <taxon>Craniata</taxon>
        <taxon>Vertebrata</taxon>
        <taxon>Euteleostomi</taxon>
        <taxon>Mammalia</taxon>
        <taxon>Eutheria</taxon>
        <taxon>Euarchontoglires</taxon>
        <taxon>Glires</taxon>
        <taxon>Rodentia</taxon>
        <taxon>Myomorpha</taxon>
        <taxon>Muroidea</taxon>
        <taxon>Muridae</taxon>
        <taxon>Murinae</taxon>
        <taxon>Mus</taxon>
        <taxon>Mus</taxon>
    </lineage>
</organism>